<evidence type="ECO:0000255" key="1">
    <source>
        <dbReference type="HAMAP-Rule" id="MF_00134"/>
    </source>
</evidence>
<name>TRPC_HALMA</name>
<keyword id="KW-0028">Amino-acid biosynthesis</keyword>
<keyword id="KW-0057">Aromatic amino acid biosynthesis</keyword>
<keyword id="KW-0210">Decarboxylase</keyword>
<keyword id="KW-0456">Lyase</keyword>
<keyword id="KW-1185">Reference proteome</keyword>
<keyword id="KW-0822">Tryptophan biosynthesis</keyword>
<proteinExistence type="inferred from homology"/>
<protein>
    <recommendedName>
        <fullName evidence="1">Indole-3-glycerol phosphate synthase</fullName>
        <shortName evidence="1">IGPS</shortName>
        <ecNumber evidence="1">4.1.1.48</ecNumber>
    </recommendedName>
</protein>
<organism>
    <name type="scientific">Haloarcula marismortui (strain ATCC 43049 / DSM 3752 / JCM 8966 / VKM B-1809)</name>
    <name type="common">Halobacterium marismortui</name>
    <dbReference type="NCBI Taxonomy" id="272569"/>
    <lineage>
        <taxon>Archaea</taxon>
        <taxon>Methanobacteriati</taxon>
        <taxon>Methanobacteriota</taxon>
        <taxon>Stenosarchaea group</taxon>
        <taxon>Halobacteria</taxon>
        <taxon>Halobacteriales</taxon>
        <taxon>Haloarculaceae</taxon>
        <taxon>Haloarcula</taxon>
    </lineage>
</organism>
<dbReference type="EC" id="4.1.1.48" evidence="1"/>
<dbReference type="EMBL" id="AY596297">
    <property type="protein sequence ID" value="AAV46765.1"/>
    <property type="molecule type" value="Genomic_DNA"/>
</dbReference>
<dbReference type="RefSeq" id="WP_011223905.1">
    <property type="nucleotide sequence ID" value="NC_006396.1"/>
</dbReference>
<dbReference type="SMR" id="Q5V138"/>
<dbReference type="STRING" id="272569.rrnAC1886"/>
<dbReference type="PaxDb" id="272569-rrnAC1886"/>
<dbReference type="EnsemblBacteria" id="AAV46765">
    <property type="protein sequence ID" value="AAV46765"/>
    <property type="gene ID" value="rrnAC1886"/>
</dbReference>
<dbReference type="GeneID" id="40152820"/>
<dbReference type="KEGG" id="hma:rrnAC1886"/>
<dbReference type="PATRIC" id="fig|272569.17.peg.2549"/>
<dbReference type="eggNOG" id="arCOG01088">
    <property type="taxonomic scope" value="Archaea"/>
</dbReference>
<dbReference type="HOGENOM" id="CLU_034247_0_1_2"/>
<dbReference type="UniPathway" id="UPA00035">
    <property type="reaction ID" value="UER00043"/>
</dbReference>
<dbReference type="Proteomes" id="UP000001169">
    <property type="component" value="Chromosome I"/>
</dbReference>
<dbReference type="GO" id="GO:0004425">
    <property type="term" value="F:indole-3-glycerol-phosphate synthase activity"/>
    <property type="evidence" value="ECO:0007669"/>
    <property type="project" value="UniProtKB-UniRule"/>
</dbReference>
<dbReference type="GO" id="GO:0004640">
    <property type="term" value="F:phosphoribosylanthranilate isomerase activity"/>
    <property type="evidence" value="ECO:0007669"/>
    <property type="project" value="TreeGrafter"/>
</dbReference>
<dbReference type="GO" id="GO:0000162">
    <property type="term" value="P:L-tryptophan biosynthetic process"/>
    <property type="evidence" value="ECO:0007669"/>
    <property type="project" value="UniProtKB-UniRule"/>
</dbReference>
<dbReference type="CDD" id="cd00331">
    <property type="entry name" value="IGPS"/>
    <property type="match status" value="1"/>
</dbReference>
<dbReference type="Gene3D" id="3.20.20.70">
    <property type="entry name" value="Aldolase class I"/>
    <property type="match status" value="1"/>
</dbReference>
<dbReference type="HAMAP" id="MF_00134_A">
    <property type="entry name" value="IGPS_A"/>
    <property type="match status" value="1"/>
</dbReference>
<dbReference type="InterPro" id="IPR013785">
    <property type="entry name" value="Aldolase_TIM"/>
</dbReference>
<dbReference type="InterPro" id="IPR054875">
    <property type="entry name" value="Indglycph_syn_Halo_TrpC"/>
</dbReference>
<dbReference type="InterPro" id="IPR045186">
    <property type="entry name" value="Indole-3-glycerol_P_synth"/>
</dbReference>
<dbReference type="InterPro" id="IPR013798">
    <property type="entry name" value="Indole-3-glycerol_P_synth_dom"/>
</dbReference>
<dbReference type="InterPro" id="IPR011060">
    <property type="entry name" value="RibuloseP-bd_barrel"/>
</dbReference>
<dbReference type="NCBIfam" id="NF041303">
    <property type="entry name" value="Indglycph_syn_Halo_TrpC"/>
    <property type="match status" value="1"/>
</dbReference>
<dbReference type="PANTHER" id="PTHR22854:SF2">
    <property type="entry name" value="INDOLE-3-GLYCEROL-PHOSPHATE SYNTHASE"/>
    <property type="match status" value="1"/>
</dbReference>
<dbReference type="PANTHER" id="PTHR22854">
    <property type="entry name" value="TRYPTOPHAN BIOSYNTHESIS PROTEIN"/>
    <property type="match status" value="1"/>
</dbReference>
<dbReference type="Pfam" id="PF00218">
    <property type="entry name" value="IGPS"/>
    <property type="match status" value="1"/>
</dbReference>
<dbReference type="SUPFAM" id="SSF51366">
    <property type="entry name" value="Ribulose-phoshate binding barrel"/>
    <property type="match status" value="1"/>
</dbReference>
<accession>Q5V138</accession>
<gene>
    <name evidence="1" type="primary">trpC</name>
    <name type="ordered locus">rrnAC1886</name>
</gene>
<reference key="1">
    <citation type="journal article" date="2004" name="Genome Res.">
        <title>Genome sequence of Haloarcula marismortui: a halophilic archaeon from the Dead Sea.</title>
        <authorList>
            <person name="Baliga N.S."/>
            <person name="Bonneau R."/>
            <person name="Facciotti M.T."/>
            <person name="Pan M."/>
            <person name="Glusman G."/>
            <person name="Deutsch E.W."/>
            <person name="Shannon P."/>
            <person name="Chiu Y."/>
            <person name="Weng R.S."/>
            <person name="Gan R.R."/>
            <person name="Hung P."/>
            <person name="Date S.V."/>
            <person name="Marcotte E."/>
            <person name="Hood L."/>
            <person name="Ng W.V."/>
        </authorList>
    </citation>
    <scope>NUCLEOTIDE SEQUENCE [LARGE SCALE GENOMIC DNA]</scope>
    <source>
        <strain>ATCC 43049 / DSM 3752 / JCM 8966 / VKM B-1809</strain>
    </source>
</reference>
<comment type="catalytic activity">
    <reaction evidence="1">
        <text>1-(2-carboxyphenylamino)-1-deoxy-D-ribulose 5-phosphate + H(+) = (1S,2R)-1-C-(indol-3-yl)glycerol 3-phosphate + CO2 + H2O</text>
        <dbReference type="Rhea" id="RHEA:23476"/>
        <dbReference type="ChEBI" id="CHEBI:15377"/>
        <dbReference type="ChEBI" id="CHEBI:15378"/>
        <dbReference type="ChEBI" id="CHEBI:16526"/>
        <dbReference type="ChEBI" id="CHEBI:58613"/>
        <dbReference type="ChEBI" id="CHEBI:58866"/>
        <dbReference type="EC" id="4.1.1.48"/>
    </reaction>
</comment>
<comment type="pathway">
    <text evidence="1">Amino-acid biosynthesis; L-tryptophan biosynthesis; L-tryptophan from chorismate: step 4/5.</text>
</comment>
<comment type="similarity">
    <text evidence="1">Belongs to the TrpC family.</text>
</comment>
<feature type="chain" id="PRO_1000018483" description="Indole-3-glycerol phosphate synthase">
    <location>
        <begin position="1"/>
        <end position="271"/>
    </location>
</feature>
<sequence>MDDSEEIAPAVQSILDAARERGGGGDRVSVTPKSLPDAFEAAADAGRTPVVAEIKPTSPTADGERADDPVDLAQQMVEGGAAALSVLTEPDHFGGSTATLERVREAVDVPVLRKDFILHENQLDVVEADVILLIVRFLEADGTDDLADLLTAARERGFQVLVETHTAAEVEKALDAGADIIGVNNRDLGELAVDLGTFEAVAPDIPEDVTLIAESGIQTADDVTRMRDAGADALLIGSAIMDHDAATDVEANTRRLTRANTDAVETTTTDT</sequence>